<keyword id="KW-0238">DNA-binding</keyword>
<keyword id="KW-1185">Reference proteome</keyword>
<reference key="1">
    <citation type="journal article" date="1993" name="Mol. Gen. Genet.">
        <title>Characterisation of PDC2, a gene necessary for high level expression of pyruvate decarboxylase structural genes in Saccharomyces cerevisiae.</title>
        <authorList>
            <person name="Hohmann S."/>
        </authorList>
    </citation>
    <scope>NUCLEOTIDE SEQUENCE [GENOMIC DNA]</scope>
</reference>
<reference key="2">
    <citation type="submission" date="1993-06" db="EMBL/GenBank/DDBJ databases">
        <title>Cloning and characterization of PDC2, a gene essential for the synthesis of pyruvate decarboxylase in Saccharomyces cerevisiae.</title>
        <authorList>
            <person name="Raghuram V."/>
            <person name="Lobo Z."/>
            <person name="Maitra P.K."/>
        </authorList>
    </citation>
    <scope>NUCLEOTIDE SEQUENCE [GENOMIC DNA]</scope>
</reference>
<reference key="3">
    <citation type="journal article" date="1995" name="Yeast">
        <title>Analysis of a 32.8 kb segment of yeast chromosome IV reveals 21 open reading frames, including TPS2, PPH3, RAD55, SED1, PDC2, AFR1, SSS1, SLU7 and a tRNA for arginine.</title>
        <authorList>
            <person name="Coster F."/>
            <person name="Jonniaux J.-L."/>
            <person name="Goffeau A."/>
        </authorList>
    </citation>
    <scope>NUCLEOTIDE SEQUENCE [GENOMIC DNA]</scope>
</reference>
<reference key="4">
    <citation type="journal article" date="1997" name="Nature">
        <title>The nucleotide sequence of Saccharomyces cerevisiae chromosome IV.</title>
        <authorList>
            <person name="Jacq C."/>
            <person name="Alt-Moerbe J."/>
            <person name="Andre B."/>
            <person name="Arnold W."/>
            <person name="Bahr A."/>
            <person name="Ballesta J.P.G."/>
            <person name="Bargues M."/>
            <person name="Baron L."/>
            <person name="Becker A."/>
            <person name="Biteau N."/>
            <person name="Bloecker H."/>
            <person name="Blugeon C."/>
            <person name="Boskovic J."/>
            <person name="Brandt P."/>
            <person name="Brueckner M."/>
            <person name="Buitrago M.J."/>
            <person name="Coster F."/>
            <person name="Delaveau T."/>
            <person name="del Rey F."/>
            <person name="Dujon B."/>
            <person name="Eide L.G."/>
            <person name="Garcia-Cantalejo J.M."/>
            <person name="Goffeau A."/>
            <person name="Gomez-Peris A."/>
            <person name="Granotier C."/>
            <person name="Hanemann V."/>
            <person name="Hankeln T."/>
            <person name="Hoheisel J.D."/>
            <person name="Jaeger W."/>
            <person name="Jimenez A."/>
            <person name="Jonniaux J.-L."/>
            <person name="Kraemer C."/>
            <person name="Kuester H."/>
            <person name="Laamanen P."/>
            <person name="Legros Y."/>
            <person name="Louis E.J."/>
            <person name="Moeller-Rieker S."/>
            <person name="Monnet A."/>
            <person name="Moro M."/>
            <person name="Mueller-Auer S."/>
            <person name="Nussbaumer B."/>
            <person name="Paricio N."/>
            <person name="Paulin L."/>
            <person name="Perea J."/>
            <person name="Perez-Alonso M."/>
            <person name="Perez-Ortin J.E."/>
            <person name="Pohl T.M."/>
            <person name="Prydz H."/>
            <person name="Purnelle B."/>
            <person name="Rasmussen S.W."/>
            <person name="Remacha M.A."/>
            <person name="Revuelta J.L."/>
            <person name="Rieger M."/>
            <person name="Salom D."/>
            <person name="Saluz H.P."/>
            <person name="Saiz J.E."/>
            <person name="Saren A.-M."/>
            <person name="Schaefer M."/>
            <person name="Scharfe M."/>
            <person name="Schmidt E.R."/>
            <person name="Schneider C."/>
            <person name="Scholler P."/>
            <person name="Schwarz S."/>
            <person name="Soler-Mira A."/>
            <person name="Urrestarazu L.A."/>
            <person name="Verhasselt P."/>
            <person name="Vissers S."/>
            <person name="Voet M."/>
            <person name="Volckaert G."/>
            <person name="Wagner G."/>
            <person name="Wambutt R."/>
            <person name="Wedler E."/>
            <person name="Wedler H."/>
            <person name="Woelfl S."/>
            <person name="Harris D.E."/>
            <person name="Bowman S."/>
            <person name="Brown D."/>
            <person name="Churcher C.M."/>
            <person name="Connor R."/>
            <person name="Dedman K."/>
            <person name="Gentles S."/>
            <person name="Hamlin N."/>
            <person name="Hunt S."/>
            <person name="Jones L."/>
            <person name="McDonald S."/>
            <person name="Murphy L.D."/>
            <person name="Niblett D."/>
            <person name="Odell C."/>
            <person name="Oliver K."/>
            <person name="Rajandream M.A."/>
            <person name="Richards C."/>
            <person name="Shore L."/>
            <person name="Walsh S.V."/>
            <person name="Barrell B.G."/>
            <person name="Dietrich F.S."/>
            <person name="Mulligan J.T."/>
            <person name="Allen E."/>
            <person name="Araujo R."/>
            <person name="Aviles E."/>
            <person name="Berno A."/>
            <person name="Carpenter J."/>
            <person name="Chen E."/>
            <person name="Cherry J.M."/>
            <person name="Chung E."/>
            <person name="Duncan M."/>
            <person name="Hunicke-Smith S."/>
            <person name="Hyman R.W."/>
            <person name="Komp C."/>
            <person name="Lashkari D."/>
            <person name="Lew H."/>
            <person name="Lin D."/>
            <person name="Mosedale D."/>
            <person name="Nakahara K."/>
            <person name="Namath A."/>
            <person name="Oefner P."/>
            <person name="Oh C."/>
            <person name="Petel F.X."/>
            <person name="Roberts D."/>
            <person name="Schramm S."/>
            <person name="Schroeder M."/>
            <person name="Shogren T."/>
            <person name="Shroff N."/>
            <person name="Winant A."/>
            <person name="Yelton M.A."/>
            <person name="Botstein D."/>
            <person name="Davis R.W."/>
            <person name="Johnston M."/>
            <person name="Andrews S."/>
            <person name="Brinkman R."/>
            <person name="Cooper J."/>
            <person name="Ding H."/>
            <person name="Du Z."/>
            <person name="Favello A."/>
            <person name="Fulton L."/>
            <person name="Gattung S."/>
            <person name="Greco T."/>
            <person name="Hallsworth K."/>
            <person name="Hawkins J."/>
            <person name="Hillier L.W."/>
            <person name="Jier M."/>
            <person name="Johnson D."/>
            <person name="Johnston L."/>
            <person name="Kirsten J."/>
            <person name="Kucaba T."/>
            <person name="Langston Y."/>
            <person name="Latreille P."/>
            <person name="Le T."/>
            <person name="Mardis E."/>
            <person name="Menezes S."/>
            <person name="Miller N."/>
            <person name="Nhan M."/>
            <person name="Pauley A."/>
            <person name="Peluso D."/>
            <person name="Rifkin L."/>
            <person name="Riles L."/>
            <person name="Taich A."/>
            <person name="Trevaskis E."/>
            <person name="Vignati D."/>
            <person name="Wilcox L."/>
            <person name="Wohldman P."/>
            <person name="Vaudin M."/>
            <person name="Wilson R."/>
            <person name="Waterston R."/>
            <person name="Albermann K."/>
            <person name="Hani J."/>
            <person name="Heumann K."/>
            <person name="Kleine K."/>
            <person name="Mewes H.-W."/>
            <person name="Zollner A."/>
            <person name="Zaccaria P."/>
        </authorList>
    </citation>
    <scope>NUCLEOTIDE SEQUENCE [LARGE SCALE GENOMIC DNA]</scope>
    <source>
        <strain>ATCC 204508 / S288c</strain>
    </source>
</reference>
<reference key="5">
    <citation type="journal article" date="2014" name="G3 (Bethesda)">
        <title>The reference genome sequence of Saccharomyces cerevisiae: Then and now.</title>
        <authorList>
            <person name="Engel S.R."/>
            <person name="Dietrich F.S."/>
            <person name="Fisk D.G."/>
            <person name="Binkley G."/>
            <person name="Balakrishnan R."/>
            <person name="Costanzo M.C."/>
            <person name="Dwight S.S."/>
            <person name="Hitz B.C."/>
            <person name="Karra K."/>
            <person name="Nash R.S."/>
            <person name="Weng S."/>
            <person name="Wong E.D."/>
            <person name="Lloyd P."/>
            <person name="Skrzypek M.S."/>
            <person name="Miyasato S.R."/>
            <person name="Simison M."/>
            <person name="Cherry J.M."/>
        </authorList>
    </citation>
    <scope>GENOME REANNOTATION</scope>
    <source>
        <strain>ATCC 204508 / S288c</strain>
    </source>
</reference>
<reference key="6">
    <citation type="journal article" date="2003" name="Nature">
        <title>Global analysis of protein expression in yeast.</title>
        <authorList>
            <person name="Ghaemmaghami S."/>
            <person name="Huh W.-K."/>
            <person name="Bower K."/>
            <person name="Howson R.W."/>
            <person name="Belle A."/>
            <person name="Dephoure N."/>
            <person name="O'Shea E.K."/>
            <person name="Weissman J.S."/>
        </authorList>
    </citation>
    <scope>LEVEL OF PROTEIN EXPRESSION [LARGE SCALE ANALYSIS]</scope>
</reference>
<reference key="7">
    <citation type="journal article" date="2009" name="Science">
        <title>Global analysis of Cdk1 substrate phosphorylation sites provides insights into evolution.</title>
        <authorList>
            <person name="Holt L.J."/>
            <person name="Tuch B.B."/>
            <person name="Villen J."/>
            <person name="Johnson A.D."/>
            <person name="Gygi S.P."/>
            <person name="Morgan D.O."/>
        </authorList>
    </citation>
    <scope>IDENTIFICATION BY MASS SPECTROMETRY [LARGE SCALE ANALYSIS]</scope>
</reference>
<reference key="8">
    <citation type="journal article" date="2012" name="Proc. Natl. Acad. Sci. U.S.A.">
        <title>N-terminal acetylome analyses and functional insights of the N-terminal acetyltransferase NatB.</title>
        <authorList>
            <person name="Van Damme P."/>
            <person name="Lasa M."/>
            <person name="Polevoda B."/>
            <person name="Gazquez C."/>
            <person name="Elosegui-Artola A."/>
            <person name="Kim D.S."/>
            <person name="De Juan-Pardo E."/>
            <person name="Demeyer K."/>
            <person name="Hole K."/>
            <person name="Larrea E."/>
            <person name="Timmerman E."/>
            <person name="Prieto J."/>
            <person name="Arnesen T."/>
            <person name="Sherman F."/>
            <person name="Gevaert K."/>
            <person name="Aldabe R."/>
        </authorList>
    </citation>
    <scope>IDENTIFICATION BY MASS SPECTROMETRY [LARGE SCALE ANALYSIS]</scope>
</reference>
<gene>
    <name type="primary">PDC2</name>
    <name type="ordered locus">YDR081C</name>
    <name type="ORF">D4451</name>
</gene>
<protein>
    <recommendedName>
        <fullName>Protein PDC2</fullName>
    </recommendedName>
</protein>
<accession>P32896</accession>
<accession>D6VS68</accession>
<accession>E9PAG9</accession>
<evidence type="ECO:0000255" key="1">
    <source>
        <dbReference type="PROSITE-ProRule" id="PRU00583"/>
    </source>
</evidence>
<evidence type="ECO:0000256" key="2">
    <source>
        <dbReference type="SAM" id="MobiDB-lite"/>
    </source>
</evidence>
<evidence type="ECO:0000269" key="3">
    <source>
    </source>
</evidence>
<evidence type="ECO:0000305" key="4"/>
<dbReference type="EMBL" id="X65608">
    <property type="protein sequence ID" value="CAA46558.1"/>
    <property type="molecule type" value="Genomic_DNA"/>
</dbReference>
<dbReference type="EMBL" id="L19880">
    <property type="protein sequence ID" value="AAA34845.1"/>
    <property type="molecule type" value="Genomic_DNA"/>
</dbReference>
<dbReference type="EMBL" id="X82086">
    <property type="protein sequence ID" value="CAA57608.1"/>
    <property type="molecule type" value="Genomic_DNA"/>
</dbReference>
<dbReference type="EMBL" id="Z46796">
    <property type="protein sequence ID" value="CAA86803.1"/>
    <property type="molecule type" value="Genomic_DNA"/>
</dbReference>
<dbReference type="EMBL" id="Z74377">
    <property type="protein sequence ID" value="CAA98900.1"/>
    <property type="molecule type" value="Genomic_DNA"/>
</dbReference>
<dbReference type="EMBL" id="Z74378">
    <property type="protein sequence ID" value="CAA98901.1"/>
    <property type="molecule type" value="Genomic_DNA"/>
</dbReference>
<dbReference type="EMBL" id="BK006938">
    <property type="protein sequence ID" value="DAA11928.1"/>
    <property type="molecule type" value="Genomic_DNA"/>
</dbReference>
<dbReference type="PIR" id="S48768">
    <property type="entry name" value="S48768"/>
</dbReference>
<dbReference type="RefSeq" id="NP_010366.1">
    <property type="nucleotide sequence ID" value="NM_001180389.1"/>
</dbReference>
<dbReference type="BioGRID" id="32137">
    <property type="interactions" value="396"/>
</dbReference>
<dbReference type="FunCoup" id="P32896">
    <property type="interactions" value="121"/>
</dbReference>
<dbReference type="IntAct" id="P32896">
    <property type="interactions" value="7"/>
</dbReference>
<dbReference type="MINT" id="P32896"/>
<dbReference type="STRING" id="4932.YDR081C"/>
<dbReference type="iPTMnet" id="P32896"/>
<dbReference type="PaxDb" id="4932-YDR081C"/>
<dbReference type="PeptideAtlas" id="P32896"/>
<dbReference type="EnsemblFungi" id="YDR081C_mRNA">
    <property type="protein sequence ID" value="YDR081C"/>
    <property type="gene ID" value="YDR081C"/>
</dbReference>
<dbReference type="GeneID" id="851654"/>
<dbReference type="KEGG" id="sce:YDR081C"/>
<dbReference type="AGR" id="SGD:S000002488"/>
<dbReference type="SGD" id="S000002488">
    <property type="gene designation" value="PDC2"/>
</dbReference>
<dbReference type="VEuPathDB" id="FungiDB:YDR081C"/>
<dbReference type="eggNOG" id="KOG3105">
    <property type="taxonomic scope" value="Eukaryota"/>
</dbReference>
<dbReference type="GeneTree" id="ENSGT00940000175769"/>
<dbReference type="HOGENOM" id="CLU_009537_0_0_1"/>
<dbReference type="InParanoid" id="P32896"/>
<dbReference type="OMA" id="VWHRIPS"/>
<dbReference type="OrthoDB" id="125347at2759"/>
<dbReference type="BioCyc" id="YEAST:G3O-29686-MONOMER"/>
<dbReference type="BioGRID-ORCS" id="851654">
    <property type="hits" value="0 hits in 10 CRISPR screens"/>
</dbReference>
<dbReference type="PRO" id="PR:P32896"/>
<dbReference type="Proteomes" id="UP000002311">
    <property type="component" value="Chromosome IV"/>
</dbReference>
<dbReference type="RNAct" id="P32896">
    <property type="molecule type" value="protein"/>
</dbReference>
<dbReference type="GO" id="GO:0005634">
    <property type="term" value="C:nucleus"/>
    <property type="evidence" value="ECO:0000318"/>
    <property type="project" value="GO_Central"/>
</dbReference>
<dbReference type="GO" id="GO:0003677">
    <property type="term" value="F:DNA binding"/>
    <property type="evidence" value="ECO:0000318"/>
    <property type="project" value="GO_Central"/>
</dbReference>
<dbReference type="GO" id="GO:0000978">
    <property type="term" value="F:RNA polymerase II cis-regulatory region sequence-specific DNA binding"/>
    <property type="evidence" value="ECO:0000314"/>
    <property type="project" value="SGD"/>
</dbReference>
<dbReference type="GO" id="GO:2001172">
    <property type="term" value="P:positive regulation of glycolytic fermentation to ethanol"/>
    <property type="evidence" value="ECO:0000315"/>
    <property type="project" value="SGD"/>
</dbReference>
<dbReference type="GO" id="GO:0090180">
    <property type="term" value="P:positive regulation of thiamine biosynthetic process"/>
    <property type="evidence" value="ECO:0000315"/>
    <property type="project" value="SGD"/>
</dbReference>
<dbReference type="GO" id="GO:0045944">
    <property type="term" value="P:positive regulation of transcription by RNA polymerase II"/>
    <property type="evidence" value="ECO:0000314"/>
    <property type="project" value="SGD"/>
</dbReference>
<dbReference type="FunFam" id="1.10.10.60:FF:000477">
    <property type="entry name" value="Pdc2p"/>
    <property type="match status" value="1"/>
</dbReference>
<dbReference type="Gene3D" id="1.10.10.60">
    <property type="entry name" value="Homeodomain-like"/>
    <property type="match status" value="2"/>
</dbReference>
<dbReference type="InterPro" id="IPR050863">
    <property type="entry name" value="CenT-Element_Derived"/>
</dbReference>
<dbReference type="InterPro" id="IPR004875">
    <property type="entry name" value="DDE_SF_endonuclease_dom"/>
</dbReference>
<dbReference type="InterPro" id="IPR009057">
    <property type="entry name" value="Homeodomain-like_sf"/>
</dbReference>
<dbReference type="InterPro" id="IPR006600">
    <property type="entry name" value="HTH_CenpB_DNA-bd_dom"/>
</dbReference>
<dbReference type="PANTHER" id="PTHR19303:SF73">
    <property type="entry name" value="PROTEIN PDC2"/>
    <property type="match status" value="1"/>
</dbReference>
<dbReference type="PANTHER" id="PTHR19303">
    <property type="entry name" value="TRANSPOSON"/>
    <property type="match status" value="1"/>
</dbReference>
<dbReference type="Pfam" id="PF03184">
    <property type="entry name" value="DDE_1"/>
    <property type="match status" value="1"/>
</dbReference>
<dbReference type="Pfam" id="PF03221">
    <property type="entry name" value="HTH_Tnp_Tc5"/>
    <property type="match status" value="1"/>
</dbReference>
<dbReference type="SMART" id="SM00674">
    <property type="entry name" value="CENPB"/>
    <property type="match status" value="1"/>
</dbReference>
<dbReference type="SUPFAM" id="SSF46689">
    <property type="entry name" value="Homeodomain-like"/>
    <property type="match status" value="1"/>
</dbReference>
<dbReference type="PROSITE" id="PS51253">
    <property type="entry name" value="HTH_CENPB"/>
    <property type="match status" value="1"/>
</dbReference>
<comment type="function">
    <text>Essential for the synthesis of pyruvate decarboxylase. May be important for a high basal level of PDC gene expression or play a positive role in the autoregulation control of PDC1 and PDC5.</text>
</comment>
<comment type="interaction">
    <interactant intactId="EBI-13004">
        <id>P32896</id>
    </interactant>
    <interactant intactId="EBI-19209">
        <id>Q07471</id>
        <label>THI3</label>
    </interactant>
    <organismsDiffer>false</organismsDiffer>
    <experiments>3</experiments>
</comment>
<comment type="miscellaneous">
    <text evidence="3">Present with 572 molecules/cell in log phase SD medium.</text>
</comment>
<name>PDC2_YEAST</name>
<feature type="chain" id="PRO_0000126137" description="Protein PDC2">
    <location>
        <begin position="1"/>
        <end position="925"/>
    </location>
</feature>
<feature type="domain" description="HTH CENPB-type" evidence="1">
    <location>
        <begin position="63"/>
        <end position="138"/>
    </location>
</feature>
<feature type="region of interest" description="Disordered" evidence="2">
    <location>
        <begin position="510"/>
        <end position="596"/>
    </location>
</feature>
<feature type="region of interest" description="Disordered" evidence="2">
    <location>
        <begin position="674"/>
        <end position="693"/>
    </location>
</feature>
<feature type="region of interest" description="Disordered" evidence="2">
    <location>
        <begin position="904"/>
        <end position="925"/>
    </location>
</feature>
<feature type="compositionally biased region" description="Polar residues" evidence="2">
    <location>
        <begin position="513"/>
        <end position="537"/>
    </location>
</feature>
<feature type="compositionally biased region" description="Low complexity" evidence="2">
    <location>
        <begin position="538"/>
        <end position="563"/>
    </location>
</feature>
<feature type="compositionally biased region" description="Polar residues" evidence="2">
    <location>
        <begin position="565"/>
        <end position="596"/>
    </location>
</feature>
<feature type="compositionally biased region" description="Basic and acidic residues" evidence="2">
    <location>
        <begin position="674"/>
        <end position="686"/>
    </location>
</feature>
<feature type="compositionally biased region" description="Polar residues" evidence="2">
    <location>
        <begin position="904"/>
        <end position="916"/>
    </location>
</feature>
<feature type="sequence conflict" description="In Ref. 1; CAA46558 and 2; AAA34845." evidence="4" ref="1 2">
    <original>H</original>
    <variation>T</variation>
    <location>
        <position position="113"/>
    </location>
</feature>
<feature type="sequence conflict" description="In Ref. 1; CAA46558 and 2; AAA34845." evidence="4" ref="1 2">
    <original>D</original>
    <variation>I</variation>
    <location>
        <position position="174"/>
    </location>
</feature>
<proteinExistence type="evidence at protein level"/>
<sequence length="925" mass="103944">MLSIQQRYNICLMAERHPKWTQLELAKWAYETFQLPKIPSQGTISRLLARKSTYMNCKEHEKDANRLRKPNNLLVRKILQEWISQSLWNGIPITSPIIQDTAQAVWHRIPAEHREGNGSFSYKWISNFLSKMDVNISVLDEELPKTPKVWTFEERDVLKAYFSKIPPKDLFTLDEAFLSYNLPLDYAQYEASSIQRRIEVATVMLCSNLDGSEKLKPVVVGKYDSYKSFRNYFPNEPNDPVSQSMLGTKMAKKFDISYHSNRKAWLTSNLFHNWLVRWDKRLVAVNRKIWIVLDDSCCHRIINLRLQNIKLVYTSSNSKFLPFNWGVWDEFKTRYRIQQYQALIDLQNRISKNIQNKNKSERNECIPNGKKCLISFEQSQLTMSNAFKFIKKAWDDIPVDAIKANWKSSGLLPPEMIHLNENVSMAFKKNEVLESVLNRLCDEYYCVKKWEYEMLLDLNIENKNTNFLSTEELVESAIVEPCEPDFDTAPKGNEVHDDNFDVSVFANEDDNNQNHLSMSQASHNPDYNSNHSNNAIENTNNRGSNNNNNNNGSSNNINDNDSSVKYLQQNTVDNSTKTGNPGQPNISSMESQRNSSTTDLVVDGNYDVNFNGLLNDPYNTMKQPGPLDYNVSTLIDKPNLFLSPDLDLSTVGVDMQLPSSEYFSEVFSSAIRNNEKAASDQNKSTDELPSSTAMANSNSITTALLESRNQAQPFDVPHMNGLLSDTSKSGHSVNSSNAISQNSLNNFQHNSASVAEASSPSITPSPVAINSTGAPARSIISAPIDSNSSASSPSALEHLEGAVSGMSPSSTTILSNLQTNINIAKSLSTIMKHAESNEISLTKETINELNFNYLTLLKRIKKTRKQLNSESIKINSKNAQDHLETLLSGAAAAAATSANNLDLPTGGSNLPDSNNLHLPGNTGFF</sequence>
<organism>
    <name type="scientific">Saccharomyces cerevisiae (strain ATCC 204508 / S288c)</name>
    <name type="common">Baker's yeast</name>
    <dbReference type="NCBI Taxonomy" id="559292"/>
    <lineage>
        <taxon>Eukaryota</taxon>
        <taxon>Fungi</taxon>
        <taxon>Dikarya</taxon>
        <taxon>Ascomycota</taxon>
        <taxon>Saccharomycotina</taxon>
        <taxon>Saccharomycetes</taxon>
        <taxon>Saccharomycetales</taxon>
        <taxon>Saccharomycetaceae</taxon>
        <taxon>Saccharomyces</taxon>
    </lineage>
</organism>